<gene>
    <name evidence="1" type="primary">prcA</name>
    <name type="ordered locus">JTY_2120</name>
</gene>
<comment type="function">
    <text evidence="1">Component of the proteasome core, a large protease complex with broad specificity involved in protein degradation.</text>
</comment>
<comment type="activity regulation">
    <text evidence="1">The formation of the proteasomal ATPase ARC-20S proteasome complex, likely via the docking of the C-termini of ARC into the intersubunit pockets in the alpha-rings, may trigger opening of the gate for substrate entry. Interconversion between the open-gate and close-gate conformations leads to a dynamic regulation of the 20S proteasome proteolysis activity.</text>
</comment>
<comment type="pathway">
    <text evidence="1">Protein degradation; proteasomal Pup-dependent pathway.</text>
</comment>
<comment type="subunit">
    <text evidence="1">The 20S proteasome core is composed of 14 alpha and 14 beta subunits that assemble into four stacked heptameric rings, resulting in a barrel-shaped structure. The two inner rings, each composed of seven catalytic beta subunits, are sandwiched by two outer rings, each composed of seven alpha subunits. The catalytic chamber with the active sites is on the inside of the barrel. Has a gated structure, the ends of the cylinder being occluded by the N-termini of the alpha-subunits. Is capped by the proteasome-associated ATPase, ARC.</text>
</comment>
<comment type="subcellular location">
    <subcellularLocation>
        <location evidence="1">Cytoplasm</location>
    </subcellularLocation>
</comment>
<comment type="similarity">
    <text evidence="1">Belongs to the peptidase T1A family.</text>
</comment>
<sequence length="248" mass="26723">MSFPYFISPEQAMRERSELARKGIARAKSVVALAYAGGVLFVAENPSRSLQKISELYDRVGFAAAGKFNEFDNLRRGGIQFADTRGYAYDRRDVTGRQLANVYAQTLGTIFTEQAKPYEVELCVAEVAHYGETKPPELYRITYDGSIADEPHFVVMGGTTEPIANALKESYAENASLTDALGIAVAALRAGSADTSGGDQPTLGVASLEVAVLDANRPRRAFRRITGSALQALLVDQESPQSDGESSG</sequence>
<accession>C1AQ25</accession>
<name>PSA_MYCBT</name>
<organism>
    <name type="scientific">Mycobacterium bovis (strain BCG / Tokyo 172 / ATCC 35737 / TMC 1019)</name>
    <dbReference type="NCBI Taxonomy" id="561275"/>
    <lineage>
        <taxon>Bacteria</taxon>
        <taxon>Bacillati</taxon>
        <taxon>Actinomycetota</taxon>
        <taxon>Actinomycetes</taxon>
        <taxon>Mycobacteriales</taxon>
        <taxon>Mycobacteriaceae</taxon>
        <taxon>Mycobacterium</taxon>
        <taxon>Mycobacterium tuberculosis complex</taxon>
    </lineage>
</organism>
<feature type="chain" id="PRO_0000397149" description="Proteasome subunit alpha">
    <location>
        <begin position="1"/>
        <end position="248"/>
    </location>
</feature>
<reference key="1">
    <citation type="journal article" date="2009" name="Vaccine">
        <title>Whole genome sequence analysis of Mycobacterium bovis bacillus Calmette-Guerin (BCG) Tokyo 172: a comparative study of BCG vaccine substrains.</title>
        <authorList>
            <person name="Seki M."/>
            <person name="Honda I."/>
            <person name="Fujita I."/>
            <person name="Yano I."/>
            <person name="Yamamoto S."/>
            <person name="Koyama A."/>
        </authorList>
    </citation>
    <scope>NUCLEOTIDE SEQUENCE [LARGE SCALE GENOMIC DNA]</scope>
    <source>
        <strain>BCG / Tokyo 172 / ATCC 35737 / TMC 1019</strain>
    </source>
</reference>
<keyword id="KW-0963">Cytoplasm</keyword>
<keyword id="KW-0647">Proteasome</keyword>
<evidence type="ECO:0000255" key="1">
    <source>
        <dbReference type="HAMAP-Rule" id="MF_00289"/>
    </source>
</evidence>
<protein>
    <recommendedName>
        <fullName evidence="1">Proteasome subunit alpha</fullName>
    </recommendedName>
    <alternativeName>
        <fullName evidence="1">20S proteasome alpha subunit</fullName>
    </alternativeName>
    <alternativeName>
        <fullName evidence="1">Proteasome core protein PrcA</fullName>
    </alternativeName>
</protein>
<proteinExistence type="inferred from homology"/>
<dbReference type="EMBL" id="AP010918">
    <property type="protein sequence ID" value="BAH26404.1"/>
    <property type="molecule type" value="Genomic_DNA"/>
</dbReference>
<dbReference type="RefSeq" id="WP_003901330.1">
    <property type="nucleotide sequence ID" value="NZ_CP014566.1"/>
</dbReference>
<dbReference type="SMR" id="C1AQ25"/>
<dbReference type="GeneID" id="45426084"/>
<dbReference type="KEGG" id="mbt:JTY_2120"/>
<dbReference type="HOGENOM" id="CLU_071031_0_0_11"/>
<dbReference type="UniPathway" id="UPA00997"/>
<dbReference type="GO" id="GO:0005737">
    <property type="term" value="C:cytoplasm"/>
    <property type="evidence" value="ECO:0007669"/>
    <property type="project" value="UniProtKB-SubCell"/>
</dbReference>
<dbReference type="GO" id="GO:0019773">
    <property type="term" value="C:proteasome core complex, alpha-subunit complex"/>
    <property type="evidence" value="ECO:0007669"/>
    <property type="project" value="UniProtKB-UniRule"/>
</dbReference>
<dbReference type="GO" id="GO:0004298">
    <property type="term" value="F:threonine-type endopeptidase activity"/>
    <property type="evidence" value="ECO:0007669"/>
    <property type="project" value="InterPro"/>
</dbReference>
<dbReference type="GO" id="GO:0019941">
    <property type="term" value="P:modification-dependent protein catabolic process"/>
    <property type="evidence" value="ECO:0007669"/>
    <property type="project" value="UniProtKB-UniRule"/>
</dbReference>
<dbReference type="GO" id="GO:0010498">
    <property type="term" value="P:proteasomal protein catabolic process"/>
    <property type="evidence" value="ECO:0007669"/>
    <property type="project" value="UniProtKB-UniRule"/>
</dbReference>
<dbReference type="CDD" id="cd01906">
    <property type="entry name" value="proteasome_protease_HslV"/>
    <property type="match status" value="1"/>
</dbReference>
<dbReference type="FunFam" id="3.60.20.10:FF:000023">
    <property type="entry name" value="Proteasome subunit alpha"/>
    <property type="match status" value="1"/>
</dbReference>
<dbReference type="Gene3D" id="3.60.20.10">
    <property type="entry name" value="Glutamine Phosphoribosylpyrophosphate, subunit 1, domain 1"/>
    <property type="match status" value="1"/>
</dbReference>
<dbReference type="HAMAP" id="MF_00289_B">
    <property type="entry name" value="Proteasome_A_B"/>
    <property type="match status" value="1"/>
</dbReference>
<dbReference type="InterPro" id="IPR029055">
    <property type="entry name" value="Ntn_hydrolases_N"/>
</dbReference>
<dbReference type="InterPro" id="IPR050115">
    <property type="entry name" value="Proteasome_alpha"/>
</dbReference>
<dbReference type="InterPro" id="IPR023332">
    <property type="entry name" value="Proteasome_alpha-type"/>
</dbReference>
<dbReference type="InterPro" id="IPR022296">
    <property type="entry name" value="Proteasome_asu_bac"/>
</dbReference>
<dbReference type="InterPro" id="IPR001353">
    <property type="entry name" value="Proteasome_sua/b"/>
</dbReference>
<dbReference type="NCBIfam" id="TIGR03691">
    <property type="entry name" value="20S_bact_alpha"/>
    <property type="match status" value="1"/>
</dbReference>
<dbReference type="PANTHER" id="PTHR11599">
    <property type="entry name" value="PROTEASOME SUBUNIT ALPHA/BETA"/>
    <property type="match status" value="1"/>
</dbReference>
<dbReference type="Pfam" id="PF00227">
    <property type="entry name" value="Proteasome"/>
    <property type="match status" value="1"/>
</dbReference>
<dbReference type="SUPFAM" id="SSF56235">
    <property type="entry name" value="N-terminal nucleophile aminohydrolases (Ntn hydrolases)"/>
    <property type="match status" value="1"/>
</dbReference>
<dbReference type="PROSITE" id="PS51475">
    <property type="entry name" value="PROTEASOME_ALPHA_2"/>
    <property type="match status" value="1"/>
</dbReference>